<reference key="1">
    <citation type="journal article" date="2005" name="BMC Genomics">
        <title>Characterization of 954 bovine full-CDS cDNA sequences.</title>
        <authorList>
            <person name="Harhay G.P."/>
            <person name="Sonstegard T.S."/>
            <person name="Keele J.W."/>
            <person name="Heaton M.P."/>
            <person name="Clawson M.L."/>
            <person name="Snelling W.M."/>
            <person name="Wiedmann R.T."/>
            <person name="Van Tassell C.P."/>
            <person name="Smith T.P.L."/>
        </authorList>
    </citation>
    <scope>NUCLEOTIDE SEQUENCE [LARGE SCALE MRNA]</scope>
</reference>
<reference key="2">
    <citation type="submission" date="2007-07" db="EMBL/GenBank/DDBJ databases">
        <authorList>
            <consortium name="NIH - Mammalian Gene Collection (MGC) project"/>
        </authorList>
    </citation>
    <scope>NUCLEOTIDE SEQUENCE [LARGE SCALE MRNA]</scope>
    <source>
        <strain>Hereford</strain>
        <tissue>Basal ganglia</tissue>
    </source>
</reference>
<organism>
    <name type="scientific">Bos taurus</name>
    <name type="common">Bovine</name>
    <dbReference type="NCBI Taxonomy" id="9913"/>
    <lineage>
        <taxon>Eukaryota</taxon>
        <taxon>Metazoa</taxon>
        <taxon>Chordata</taxon>
        <taxon>Craniata</taxon>
        <taxon>Vertebrata</taxon>
        <taxon>Euteleostomi</taxon>
        <taxon>Mammalia</taxon>
        <taxon>Eutheria</taxon>
        <taxon>Laurasiatheria</taxon>
        <taxon>Artiodactyla</taxon>
        <taxon>Ruminantia</taxon>
        <taxon>Pecora</taxon>
        <taxon>Bovidae</taxon>
        <taxon>Bovinae</taxon>
        <taxon>Bos</taxon>
    </lineage>
</organism>
<comment type="subcellular location">
    <subcellularLocation>
        <location evidence="4">Membrane</location>
        <topology evidence="4">Single-pass type II membrane protein</topology>
    </subcellularLocation>
</comment>
<comment type="similarity">
    <text evidence="4">Belongs to the aspartyl/asparaginyl beta-hydroxylase family.</text>
</comment>
<protein>
    <recommendedName>
        <fullName>Aspartate beta-hydroxylase domain-containing protein 1</fullName>
        <ecNumber>1.14.11.-</ecNumber>
    </recommendedName>
</protein>
<sequence>MWRGSSAGGSQGAAMEGTGGELGGQGNWGLEDAPGLLARASLPIMPAWPLPLASSALTLLLGALTSLFLWYCYRLGSQDMQALGTGSRAGAVGGRPGGCSEAGRPSPGRSGESGEGPRTEGLMSRRLRAYARRYSWAGMGRVRRAAQGGPSPGGGPGVLGIQRPGLLFLPDLPSAPFVPREAQRHDVELLESSFPAILRDFGAVSWDFSGTTPPPRGWSPPLAPGCYQLLLYQAGRCQPSNCRRCPGAYRALRGLRSFMSANTFGNAGFSVLLPGARLEGRCGPTNARVRCHLGLKIPPGCELVVGGEPQCWAEGHCLLVDDSFLYTVAHNGSPEDGPRVVFIVDLWHPNVAGAERQALDFVFAPDP</sequence>
<name>ASPH1_BOVIN</name>
<accession>A1L515</accession>
<feature type="chain" id="PRO_0000394141" description="Aspartate beta-hydroxylase domain-containing protein 1">
    <location>
        <begin position="1"/>
        <end position="367"/>
    </location>
</feature>
<feature type="topological domain" description="Cytoplasmic" evidence="2">
    <location>
        <begin position="1"/>
        <end position="49"/>
    </location>
</feature>
<feature type="transmembrane region" description="Helical" evidence="2">
    <location>
        <begin position="50"/>
        <end position="72"/>
    </location>
</feature>
<feature type="topological domain" description="Lumenal" evidence="2">
    <location>
        <begin position="73"/>
        <end position="367"/>
    </location>
</feature>
<feature type="region of interest" description="Disordered" evidence="3">
    <location>
        <begin position="1"/>
        <end position="27"/>
    </location>
</feature>
<feature type="region of interest" description="Disordered" evidence="3">
    <location>
        <begin position="88"/>
        <end position="122"/>
    </location>
</feature>
<feature type="modified residue" description="Phosphoserine" evidence="1">
    <location>
        <position position="106"/>
    </location>
</feature>
<proteinExistence type="evidence at transcript level"/>
<gene>
    <name type="primary">ASPHD1</name>
</gene>
<dbReference type="EC" id="1.14.11.-"/>
<dbReference type="EMBL" id="BT029802">
    <property type="protein sequence ID" value="ABM21541.1"/>
    <property type="molecule type" value="mRNA"/>
</dbReference>
<dbReference type="EMBL" id="BC149115">
    <property type="protein sequence ID" value="AAI49116.1"/>
    <property type="molecule type" value="mRNA"/>
</dbReference>
<dbReference type="RefSeq" id="NP_001075210.1">
    <property type="nucleotide sequence ID" value="NM_001081741.1"/>
</dbReference>
<dbReference type="SMR" id="A1L515"/>
<dbReference type="FunCoup" id="A1L515">
    <property type="interactions" value="844"/>
</dbReference>
<dbReference type="STRING" id="9913.ENSBTAP00000037186"/>
<dbReference type="PaxDb" id="9913-ENSBTAP00000037186"/>
<dbReference type="Ensembl" id="ENSBTAT00000037353.5">
    <property type="protein sequence ID" value="ENSBTAP00000037186.5"/>
    <property type="gene ID" value="ENSBTAG00000026319.6"/>
</dbReference>
<dbReference type="GeneID" id="614735"/>
<dbReference type="KEGG" id="bta:614735"/>
<dbReference type="CTD" id="253982"/>
<dbReference type="VEuPathDB" id="HostDB:ENSBTAG00000026319"/>
<dbReference type="VGNC" id="VGNC:26220">
    <property type="gene designation" value="ASPHD1"/>
</dbReference>
<dbReference type="eggNOG" id="KOG3696">
    <property type="taxonomic scope" value="Eukaryota"/>
</dbReference>
<dbReference type="GeneTree" id="ENSGT00940000161676"/>
<dbReference type="HOGENOM" id="CLU_059279_3_1_1"/>
<dbReference type="InParanoid" id="A1L515"/>
<dbReference type="OMA" id="WGLEDAP"/>
<dbReference type="OrthoDB" id="438431at2759"/>
<dbReference type="Proteomes" id="UP000009136">
    <property type="component" value="Chromosome 25"/>
</dbReference>
<dbReference type="Bgee" id="ENSBTAG00000026319">
    <property type="expression patterns" value="Expressed in temporal cortex and 25 other cell types or tissues"/>
</dbReference>
<dbReference type="GO" id="GO:0016020">
    <property type="term" value="C:membrane"/>
    <property type="evidence" value="ECO:0007669"/>
    <property type="project" value="UniProtKB-SubCell"/>
</dbReference>
<dbReference type="GO" id="GO:0051213">
    <property type="term" value="F:dioxygenase activity"/>
    <property type="evidence" value="ECO:0007669"/>
    <property type="project" value="UniProtKB-KW"/>
</dbReference>
<dbReference type="Gene3D" id="2.60.120.330">
    <property type="entry name" value="B-lactam Antibiotic, Isopenicillin N Synthase, Chain"/>
    <property type="match status" value="1"/>
</dbReference>
<dbReference type="InterPro" id="IPR007803">
    <property type="entry name" value="Asp/Arg/Pro-Hydrxlase"/>
</dbReference>
<dbReference type="InterPro" id="IPR051821">
    <property type="entry name" value="Asp/Asn_beta-hydroxylase"/>
</dbReference>
<dbReference type="InterPro" id="IPR027443">
    <property type="entry name" value="IPNS-like_sf"/>
</dbReference>
<dbReference type="PANTHER" id="PTHR46332:SF1">
    <property type="entry name" value="ASPARTATE BETA-HYDROXYLASE DOMAIN-CONTAINING PROTEIN 1"/>
    <property type="match status" value="1"/>
</dbReference>
<dbReference type="PANTHER" id="PTHR46332">
    <property type="entry name" value="ASPARTATE BETA-HYDROXYLASE DOMAIN-CONTAINING PROTEIN 2"/>
    <property type="match status" value="1"/>
</dbReference>
<dbReference type="Pfam" id="PF05118">
    <property type="entry name" value="Asp_Arg_Hydrox"/>
    <property type="match status" value="1"/>
</dbReference>
<dbReference type="SUPFAM" id="SSF51197">
    <property type="entry name" value="Clavaminate synthase-like"/>
    <property type="match status" value="1"/>
</dbReference>
<evidence type="ECO:0000250" key="1">
    <source>
        <dbReference type="UniProtKB" id="Q5U4P2"/>
    </source>
</evidence>
<evidence type="ECO:0000255" key="2"/>
<evidence type="ECO:0000256" key="3">
    <source>
        <dbReference type="SAM" id="MobiDB-lite"/>
    </source>
</evidence>
<evidence type="ECO:0000305" key="4"/>
<keyword id="KW-0223">Dioxygenase</keyword>
<keyword id="KW-0472">Membrane</keyword>
<keyword id="KW-0560">Oxidoreductase</keyword>
<keyword id="KW-0597">Phosphoprotein</keyword>
<keyword id="KW-1185">Reference proteome</keyword>
<keyword id="KW-0735">Signal-anchor</keyword>
<keyword id="KW-0812">Transmembrane</keyword>
<keyword id="KW-1133">Transmembrane helix</keyword>